<proteinExistence type="inferred from homology"/>
<evidence type="ECO:0000255" key="1">
    <source>
        <dbReference type="HAMAP-Rule" id="MF_00056"/>
    </source>
</evidence>
<comment type="catalytic activity">
    <reaction evidence="1">
        <text>D-arabinose 5-phosphate + phosphoenolpyruvate + H2O = 3-deoxy-alpha-D-manno-2-octulosonate-8-phosphate + phosphate</text>
        <dbReference type="Rhea" id="RHEA:14053"/>
        <dbReference type="ChEBI" id="CHEBI:15377"/>
        <dbReference type="ChEBI" id="CHEBI:43474"/>
        <dbReference type="ChEBI" id="CHEBI:57693"/>
        <dbReference type="ChEBI" id="CHEBI:58702"/>
        <dbReference type="ChEBI" id="CHEBI:85985"/>
        <dbReference type="EC" id="2.5.1.55"/>
    </reaction>
</comment>
<comment type="pathway">
    <text evidence="1">Carbohydrate biosynthesis; 3-deoxy-D-manno-octulosonate biosynthesis; 3-deoxy-D-manno-octulosonate from D-ribulose 5-phosphate: step 2/3.</text>
</comment>
<comment type="pathway">
    <text evidence="1">Bacterial outer membrane biogenesis; lipopolysaccharide biosynthesis.</text>
</comment>
<comment type="subcellular location">
    <subcellularLocation>
        <location evidence="1">Cytoplasm</location>
    </subcellularLocation>
</comment>
<comment type="similarity">
    <text evidence="1">Belongs to the KdsA family.</text>
</comment>
<gene>
    <name evidence="1" type="primary">kdsA</name>
    <name type="ordered locus">YpAngola_A2456</name>
</gene>
<accession>A9QZ04</accession>
<feature type="chain" id="PRO_1000091847" description="2-dehydro-3-deoxyphosphooctonate aldolase">
    <location>
        <begin position="1"/>
        <end position="284"/>
    </location>
</feature>
<keyword id="KW-0963">Cytoplasm</keyword>
<keyword id="KW-0448">Lipopolysaccharide biosynthesis</keyword>
<keyword id="KW-0808">Transferase</keyword>
<reference key="1">
    <citation type="journal article" date="2010" name="J. Bacteriol.">
        <title>Genome sequence of the deep-rooted Yersinia pestis strain Angola reveals new insights into the evolution and pangenome of the plague bacterium.</title>
        <authorList>
            <person name="Eppinger M."/>
            <person name="Worsham P.L."/>
            <person name="Nikolich M.P."/>
            <person name="Riley D.R."/>
            <person name="Sebastian Y."/>
            <person name="Mou S."/>
            <person name="Achtman M."/>
            <person name="Lindler L.E."/>
            <person name="Ravel J."/>
        </authorList>
    </citation>
    <scope>NUCLEOTIDE SEQUENCE [LARGE SCALE GENOMIC DNA]</scope>
    <source>
        <strain>Angola</strain>
    </source>
</reference>
<organism>
    <name type="scientific">Yersinia pestis bv. Antiqua (strain Angola)</name>
    <dbReference type="NCBI Taxonomy" id="349746"/>
    <lineage>
        <taxon>Bacteria</taxon>
        <taxon>Pseudomonadati</taxon>
        <taxon>Pseudomonadota</taxon>
        <taxon>Gammaproteobacteria</taxon>
        <taxon>Enterobacterales</taxon>
        <taxon>Yersiniaceae</taxon>
        <taxon>Yersinia</taxon>
    </lineage>
</organism>
<protein>
    <recommendedName>
        <fullName evidence="1">2-dehydro-3-deoxyphosphooctonate aldolase</fullName>
        <ecNumber evidence="1">2.5.1.55</ecNumber>
    </recommendedName>
    <alternativeName>
        <fullName evidence="1">3-deoxy-D-manno-octulosonic acid 8-phosphate synthase</fullName>
    </alternativeName>
    <alternativeName>
        <fullName evidence="1">KDO-8-phosphate synthase</fullName>
        <shortName evidence="1">KDO 8-P synthase</shortName>
        <shortName evidence="1">KDOPS</shortName>
    </alternativeName>
    <alternativeName>
        <fullName evidence="1">Phospho-2-dehydro-3-deoxyoctonate aldolase</fullName>
    </alternativeName>
</protein>
<name>KDSA_YERPG</name>
<sequence>MKQKVVSIGDINVANDLPFVLFGGMNVLESRDLAMRICEHYVTVTQKLGIPYVFKASFDKANRSSIHSYRGPGLEEGMKIFQELKQQFGVKVITDVHEASQAQPVSEVVDVIQLPAFLARQTDLVEAMARTGAVINVKKPQFVSPGQMGNIVEKFKEAGNDQVILCDRGSNFGYDNLVVDMLGINVMVQATGGHPVIFDVTHALQCRDPFGAASGGRRAQVAELARAGMAVGLAGLFIEAHPEPNSAKCDGPSALPLDKLEPFLVQMKAIDDLVKSFPALDTSK</sequence>
<dbReference type="EC" id="2.5.1.55" evidence="1"/>
<dbReference type="EMBL" id="CP000901">
    <property type="protein sequence ID" value="ABX86566.1"/>
    <property type="molecule type" value="Genomic_DNA"/>
</dbReference>
<dbReference type="RefSeq" id="WP_002211232.1">
    <property type="nucleotide sequence ID" value="NZ_CP009935.1"/>
</dbReference>
<dbReference type="SMR" id="A9QZ04"/>
<dbReference type="GeneID" id="96665504"/>
<dbReference type="KEGG" id="ypg:YpAngola_A2456"/>
<dbReference type="PATRIC" id="fig|349746.12.peg.3474"/>
<dbReference type="UniPathway" id="UPA00030"/>
<dbReference type="UniPathway" id="UPA00357">
    <property type="reaction ID" value="UER00474"/>
</dbReference>
<dbReference type="GO" id="GO:0005737">
    <property type="term" value="C:cytoplasm"/>
    <property type="evidence" value="ECO:0007669"/>
    <property type="project" value="UniProtKB-SubCell"/>
</dbReference>
<dbReference type="GO" id="GO:0008676">
    <property type="term" value="F:3-deoxy-8-phosphooctulonate synthase activity"/>
    <property type="evidence" value="ECO:0007669"/>
    <property type="project" value="UniProtKB-UniRule"/>
</dbReference>
<dbReference type="GO" id="GO:0019294">
    <property type="term" value="P:keto-3-deoxy-D-manno-octulosonic acid biosynthetic process"/>
    <property type="evidence" value="ECO:0007669"/>
    <property type="project" value="UniProtKB-UniRule"/>
</dbReference>
<dbReference type="FunFam" id="3.20.20.70:FF:000058">
    <property type="entry name" value="2-dehydro-3-deoxyphosphooctonate aldolase"/>
    <property type="match status" value="1"/>
</dbReference>
<dbReference type="Gene3D" id="3.20.20.70">
    <property type="entry name" value="Aldolase class I"/>
    <property type="match status" value="1"/>
</dbReference>
<dbReference type="HAMAP" id="MF_00056">
    <property type="entry name" value="KDO8P_synth"/>
    <property type="match status" value="1"/>
</dbReference>
<dbReference type="InterPro" id="IPR013785">
    <property type="entry name" value="Aldolase_TIM"/>
</dbReference>
<dbReference type="InterPro" id="IPR006218">
    <property type="entry name" value="DAHP1/KDSA"/>
</dbReference>
<dbReference type="InterPro" id="IPR006269">
    <property type="entry name" value="KDO8P_synthase"/>
</dbReference>
<dbReference type="NCBIfam" id="TIGR01362">
    <property type="entry name" value="KDO8P_synth"/>
    <property type="match status" value="1"/>
</dbReference>
<dbReference type="NCBIfam" id="NF003543">
    <property type="entry name" value="PRK05198.1"/>
    <property type="match status" value="1"/>
</dbReference>
<dbReference type="NCBIfam" id="NF009109">
    <property type="entry name" value="PRK12457.1"/>
    <property type="match status" value="1"/>
</dbReference>
<dbReference type="PANTHER" id="PTHR21057">
    <property type="entry name" value="PHOSPHO-2-DEHYDRO-3-DEOXYHEPTONATE ALDOLASE"/>
    <property type="match status" value="1"/>
</dbReference>
<dbReference type="Pfam" id="PF00793">
    <property type="entry name" value="DAHP_synth_1"/>
    <property type="match status" value="1"/>
</dbReference>
<dbReference type="SUPFAM" id="SSF51569">
    <property type="entry name" value="Aldolase"/>
    <property type="match status" value="1"/>
</dbReference>